<feature type="chain" id="PRO_0000368034" description="RNA-directed RNA polymerase">
    <location>
        <begin position="1"/>
        <end position="1088"/>
    </location>
</feature>
<feature type="domain" description="RdRp catalytic" evidence="2">
    <location>
        <begin position="501"/>
        <end position="687"/>
    </location>
</feature>
<sequence>MGKYNLILSEYLSFVYNSQSAVQIPIYYSSNSELEKRCIEFHAKCVDSSKKGLSLKSLFEEYKDVIDNATLLSILSYSYDKYNAVERKLVNYAKGKPLEADLTANEIDYENNKITSELFQSAEEYTDSLMDPAILTSLSSNLNAVMFWLERHSNDVADANKIYKRRLDLFTIVASTINKYGVPRHNEKYRYEYEVMKDKPYYLVTWANSSIEMLMSVFSHEDYLIAKELIILSYSNRSTLAKLVSSPMSILVALIDINGTFITNEELELEFSDKYIKAIVPDQIFDELQEMIDNMRKAGLVDIPRMIQEWLVDCSLEKFTLMSKIYSWSFHVGFRKQKMIDAALDQLKTEYTEDVDGEMYNEYTMLIRDEIVKMLEVPVKHDDHLLRDSELAGLLSMSSASNGESRQLKFGRKTIFSTKKNMHVMDDIAHGRYTPGVIPPVNVDRPIPLGRRDVPGRRTRIIFILPYEYFIAQHAVVEKMLSYAKHTREYAEFYSQSNQLLSYGDVTRFLSSNSMVLYTDVSQWDSSQHNTQPFRKGIIMGLDMLSNMTNDPKVVQTLNLYKQTQINLMDSYVQIPDGNVIKKIQYGAVASGEKQTKAANSIANLALIKTVLSRIANKYSFITKIIRVDGDDNYAVLQFNTDVTKQMVQDVSNDVRYIYSRMNAKVKALVSTVGIEIAKRYIAGGKIFFRAGINLLNNEKRGQSTQWDQAAILYSNYIVNKLRGFETDREFILTKIIQMTSVAITGSLRLFPSERVLTTNSTFKVFDSEDFIIEYGTTNDEVYIQRAFMSLSSQKSGIADEIASSQTFKNYVNKLSDQLLISKNVIVSKGIAVTEKAKLNSYAPVYLEKRRAQISALLTMLQKPVSFKSNKITINDILRDIKPFFVTSEANLPIQYRKFMPTLPNNVQYVIQCIGSRTYQIEDSGSKSSISKLISKYSVYKPSIEELYKVISLREQEIQLYLVSLGVPPVDASTYVGSRIYSQDKYKILESYVYNLLSINYGCYQLFDFNSPDLEKLIRIPFKGKIPAVTFILHLYAKLEIINYAIKNGAWISLFCNYPKSEMIKLWKKMWNITALRSPYTSANFFQD</sequence>
<reference key="1">
    <citation type="journal article" date="2008" name="J. Virol.">
        <title>Full genome-based classification of rotaviruses reveals a common origin between human Wa-Like and porcine rotavirus strains and human DS-1-like and bovine rotavirus strains.</title>
        <authorList>
            <person name="Matthijnssens J."/>
            <person name="Ciarlet M."/>
            <person name="Heiman E.M."/>
            <person name="Arijs I."/>
            <person name="Delbeke T."/>
            <person name="McDonald S.M."/>
            <person name="Palombo E.A."/>
            <person name="Iturriza-Gomara M."/>
            <person name="Maes P."/>
            <person name="Patton J.T."/>
            <person name="Rahman M."/>
            <person name="Van Ranst M."/>
        </authorList>
    </citation>
    <scope>NUCLEOTIDE SEQUENCE [GENOMIC RNA]</scope>
</reference>
<evidence type="ECO:0000250" key="1"/>
<evidence type="ECO:0000255" key="2">
    <source>
        <dbReference type="PROSITE-ProRule" id="PRU00539"/>
    </source>
</evidence>
<evidence type="ECO:0000305" key="3"/>
<organism>
    <name type="scientific">Rotavirus A (isolate RVA/Human/United States/WI61/1983/G9P1A[8])</name>
    <name type="common">RV-A</name>
    <dbReference type="NCBI Taxonomy" id="578830"/>
    <lineage>
        <taxon>Viruses</taxon>
        <taxon>Riboviria</taxon>
        <taxon>Orthornavirae</taxon>
        <taxon>Duplornaviricota</taxon>
        <taxon>Resentoviricetes</taxon>
        <taxon>Reovirales</taxon>
        <taxon>Sedoreoviridae</taxon>
        <taxon>Rotavirus</taxon>
        <taxon>Rotavirus A</taxon>
    </lineage>
</organism>
<comment type="function">
    <text evidence="2">RNA-directed RNA polymerase that is involved in both transcription and genome replication. Together with VP3 capping enzyme, forms an enzyme complex positioned near the channels situated at each of the five-fold vertices of the core. Following infection, the outermost layer of the virus is lost, leaving a double-layered particle (DLP) made up of the core and VP6 shell. VP1 then catalyzes the transcription of fully conservative plus-strand genomic RNAs that are extruded through the DLP's channels into the cytoplasm where they function as mRNAs for translation of viral proteins. One copy of each of the viral (+)RNAs is also recruited during core assembly, together with newly synthesized polymerase complexes and VP2. The polymerase of these novo-formed particles catalyzes the synthesis of complementary minus-strands leading to dsRNA formation. To do so, the polymerase specifically recognizes and binds 4 bases 5'-UGUG-3' in the conserved 3'-sequence of plus-strand RNA templates. VP2 presumably activates the autoinhibited VP1-RNA complex to coordinate packaging and genome replication. Once dsRNA synthesis is complete, the polymerase switches to the transcriptional mode, thus providing secondary transcription (By similarity).</text>
</comment>
<comment type="catalytic activity">
    <reaction evidence="2">
        <text>RNA(n) + a ribonucleoside 5'-triphosphate = RNA(n+1) + diphosphate</text>
        <dbReference type="Rhea" id="RHEA:21248"/>
        <dbReference type="Rhea" id="RHEA-COMP:14527"/>
        <dbReference type="Rhea" id="RHEA-COMP:17342"/>
        <dbReference type="ChEBI" id="CHEBI:33019"/>
        <dbReference type="ChEBI" id="CHEBI:61557"/>
        <dbReference type="ChEBI" id="CHEBI:140395"/>
        <dbReference type="EC" id="2.7.7.48"/>
    </reaction>
</comment>
<comment type="cofactor">
    <cofactor evidence="3">
        <name>Mg(2+)</name>
        <dbReference type="ChEBI" id="CHEBI:18420"/>
    </cofactor>
</comment>
<comment type="subunit">
    <text evidence="1 3">Interacts with VP3 (Potential). Interacts with VP2; this interaction activates VP1. Interacts with NSP5; this interaction is probably necessary for the formation of functional virus factories. Interacts with NSP2; this interaction is weak (By similarity).</text>
</comment>
<comment type="subcellular location">
    <subcellularLocation>
        <location evidence="3">Virion</location>
    </subcellularLocation>
    <text evidence="1">Attached inside the inner capsid as a minor component. Also found in spherical cytoplasmic structures, called virus factories, that appear early after infection and are the site of viral replication and packaging (By similarity).</text>
</comment>
<comment type="similarity">
    <text evidence="3">Belongs to the reoviridae RNA-directed RNA polymerase family.</text>
</comment>
<protein>
    <recommendedName>
        <fullName>RNA-directed RNA polymerase</fullName>
        <ecNumber>2.7.7.48</ecNumber>
    </recommendedName>
    <alternativeName>
        <fullName>Protein VP1</fullName>
    </alternativeName>
</protein>
<organismHost>
    <name type="scientific">Homo sapiens</name>
    <name type="common">Human</name>
    <dbReference type="NCBI Taxonomy" id="9606"/>
</organismHost>
<accession>B1NKU1</accession>
<dbReference type="EC" id="2.7.7.48"/>
<dbReference type="EMBL" id="EF583049">
    <property type="protein sequence ID" value="ABU87858.1"/>
    <property type="molecule type" value="Genomic_RNA"/>
</dbReference>
<dbReference type="SMR" id="B1NKU1"/>
<dbReference type="Proteomes" id="UP000006580">
    <property type="component" value="Genome"/>
</dbReference>
<dbReference type="GO" id="GO:0044423">
    <property type="term" value="C:virion component"/>
    <property type="evidence" value="ECO:0007669"/>
    <property type="project" value="UniProtKB-KW"/>
</dbReference>
<dbReference type="GO" id="GO:0000166">
    <property type="term" value="F:nucleotide binding"/>
    <property type="evidence" value="ECO:0007669"/>
    <property type="project" value="UniProtKB-KW"/>
</dbReference>
<dbReference type="GO" id="GO:0003723">
    <property type="term" value="F:RNA binding"/>
    <property type="evidence" value="ECO:0007669"/>
    <property type="project" value="UniProtKB-KW"/>
</dbReference>
<dbReference type="GO" id="GO:0003968">
    <property type="term" value="F:RNA-directed RNA polymerase activity"/>
    <property type="evidence" value="ECO:0007669"/>
    <property type="project" value="UniProtKB-KW"/>
</dbReference>
<dbReference type="GO" id="GO:0006351">
    <property type="term" value="P:DNA-templated transcription"/>
    <property type="evidence" value="ECO:0007669"/>
    <property type="project" value="InterPro"/>
</dbReference>
<dbReference type="GO" id="GO:0019079">
    <property type="term" value="P:viral genome replication"/>
    <property type="evidence" value="ECO:0007669"/>
    <property type="project" value="InterPro"/>
</dbReference>
<dbReference type="Gene3D" id="1.10.357.80">
    <property type="match status" value="2"/>
</dbReference>
<dbReference type="Gene3D" id="1.20.120.1390">
    <property type="match status" value="1"/>
</dbReference>
<dbReference type="Gene3D" id="3.30.230.140">
    <property type="match status" value="2"/>
</dbReference>
<dbReference type="Gene3D" id="3.30.70.2480">
    <property type="match status" value="1"/>
</dbReference>
<dbReference type="Gene3D" id="1.10.10.1990">
    <property type="entry name" value="Viral RNA-directed RNA polymerase, 4-helical domain"/>
    <property type="match status" value="1"/>
</dbReference>
<dbReference type="InterPro" id="IPR043502">
    <property type="entry name" value="DNA/RNA_pol_sf"/>
</dbReference>
<dbReference type="InterPro" id="IPR042032">
    <property type="entry name" value="RNA-dir_pol_4-hel_dom"/>
</dbReference>
<dbReference type="InterPro" id="IPR001795">
    <property type="entry name" value="RNA-dir_pol_luteovirus"/>
</dbReference>
<dbReference type="InterPro" id="IPR007097">
    <property type="entry name" value="RNA-dir_pol_reovirus"/>
</dbReference>
<dbReference type="InterPro" id="IPR022071">
    <property type="entry name" value="Rotavirus_VP1_C"/>
</dbReference>
<dbReference type="Pfam" id="PF02123">
    <property type="entry name" value="RdRP_4"/>
    <property type="match status" value="1"/>
</dbReference>
<dbReference type="Pfam" id="PF12289">
    <property type="entry name" value="Rotavirus_VP1"/>
    <property type="match status" value="1"/>
</dbReference>
<dbReference type="SUPFAM" id="SSF56672">
    <property type="entry name" value="DNA/RNA polymerases"/>
    <property type="match status" value="1"/>
</dbReference>
<dbReference type="PROSITE" id="PS50523">
    <property type="entry name" value="RDRP_DSRNA_REO"/>
    <property type="match status" value="1"/>
</dbReference>
<proteinExistence type="inferred from homology"/>
<keyword id="KW-0460">Magnesium</keyword>
<keyword id="KW-0547">Nucleotide-binding</keyword>
<keyword id="KW-0548">Nucleotidyltransferase</keyword>
<keyword id="KW-0694">RNA-binding</keyword>
<keyword id="KW-0696">RNA-directed RNA polymerase</keyword>
<keyword id="KW-0808">Transferase</keyword>
<keyword id="KW-0693">Viral RNA replication</keyword>
<keyword id="KW-0946">Virion</keyword>
<name>RDRP_ROTWI</name>